<accession>P48466</accession>
<accession>Q7RVM5</accession>
<accession>V5IPH1</accession>
<reference key="1">
    <citation type="journal article" date="1996" name="Genetics">
        <title>eth-1, the Neurospora crassa locus encoding S-adenosylmethionine synthetase: molecular cloning, sequence analysis and in vivo overexpression.</title>
        <authorList>
            <person name="Mautino M.R."/>
            <person name="Barra J.L."/>
            <person name="Rosa A.L."/>
        </authorList>
    </citation>
    <scope>NUCLEOTIDE SEQUENCE [MRNA]</scope>
    <scope>FUNCTION</scope>
    <scope>CATALYTIC ACTIVITY</scope>
    <scope>PATHWAY</scope>
    <source>
        <tissue>Micelial</tissue>
    </source>
</reference>
<reference key="2">
    <citation type="journal article" date="2003" name="Nucleic Acids Res.">
        <title>What's in the genome of a filamentous fungus? Analysis of the Neurospora genome sequence.</title>
        <authorList>
            <person name="Mannhaupt G."/>
            <person name="Montrone C."/>
            <person name="Haase D."/>
            <person name="Mewes H.-W."/>
            <person name="Aign V."/>
            <person name="Hoheisel J.D."/>
            <person name="Fartmann B."/>
            <person name="Nyakatura G."/>
            <person name="Kempken F."/>
            <person name="Maier J."/>
            <person name="Schulte U."/>
        </authorList>
    </citation>
    <scope>NUCLEOTIDE SEQUENCE [LARGE SCALE GENOMIC DNA]</scope>
    <source>
        <strain>ATCC 24698 / 74-OR23-1A / CBS 708.71 / DSM 1257 / FGSC 987</strain>
    </source>
</reference>
<reference key="3">
    <citation type="journal article" date="2003" name="Nature">
        <title>The genome sequence of the filamentous fungus Neurospora crassa.</title>
        <authorList>
            <person name="Galagan J.E."/>
            <person name="Calvo S.E."/>
            <person name="Borkovich K.A."/>
            <person name="Selker E.U."/>
            <person name="Read N.D."/>
            <person name="Jaffe D.B."/>
            <person name="FitzHugh W."/>
            <person name="Ma L.-J."/>
            <person name="Smirnov S."/>
            <person name="Purcell S."/>
            <person name="Rehman B."/>
            <person name="Elkins T."/>
            <person name="Engels R."/>
            <person name="Wang S."/>
            <person name="Nielsen C.B."/>
            <person name="Butler J."/>
            <person name="Endrizzi M."/>
            <person name="Qui D."/>
            <person name="Ianakiev P."/>
            <person name="Bell-Pedersen D."/>
            <person name="Nelson M.A."/>
            <person name="Werner-Washburne M."/>
            <person name="Selitrennikoff C.P."/>
            <person name="Kinsey J.A."/>
            <person name="Braun E.L."/>
            <person name="Zelter A."/>
            <person name="Schulte U."/>
            <person name="Kothe G.O."/>
            <person name="Jedd G."/>
            <person name="Mewes H.-W."/>
            <person name="Staben C."/>
            <person name="Marcotte E."/>
            <person name="Greenberg D."/>
            <person name="Roy A."/>
            <person name="Foley K."/>
            <person name="Naylor J."/>
            <person name="Stange-Thomann N."/>
            <person name="Barrett R."/>
            <person name="Gnerre S."/>
            <person name="Kamal M."/>
            <person name="Kamvysselis M."/>
            <person name="Mauceli E.W."/>
            <person name="Bielke C."/>
            <person name="Rudd S."/>
            <person name="Frishman D."/>
            <person name="Krystofova S."/>
            <person name="Rasmussen C."/>
            <person name="Metzenberg R.L."/>
            <person name="Perkins D.D."/>
            <person name="Kroken S."/>
            <person name="Cogoni C."/>
            <person name="Macino G."/>
            <person name="Catcheside D.E.A."/>
            <person name="Li W."/>
            <person name="Pratt R.J."/>
            <person name="Osmani S.A."/>
            <person name="DeSouza C.P.C."/>
            <person name="Glass N.L."/>
            <person name="Orbach M.J."/>
            <person name="Berglund J.A."/>
            <person name="Voelker R."/>
            <person name="Yarden O."/>
            <person name="Plamann M."/>
            <person name="Seiler S."/>
            <person name="Dunlap J.C."/>
            <person name="Radford A."/>
            <person name="Aramayo R."/>
            <person name="Natvig D.O."/>
            <person name="Alex L.A."/>
            <person name="Mannhaupt G."/>
            <person name="Ebbole D.J."/>
            <person name="Freitag M."/>
            <person name="Paulsen I."/>
            <person name="Sachs M.S."/>
            <person name="Lander E.S."/>
            <person name="Nusbaum C."/>
            <person name="Birren B.W."/>
        </authorList>
    </citation>
    <scope>NUCLEOTIDE SEQUENCE [LARGE SCALE GENOMIC DNA]</scope>
    <source>
        <strain>ATCC 24698 / 74-OR23-1A / CBS 708.71 / DSM 1257 / FGSC 987</strain>
    </source>
</reference>
<name>METK_NEUCR</name>
<dbReference type="EC" id="2.5.1.6" evidence="4"/>
<dbReference type="EMBL" id="U21547">
    <property type="protein sequence ID" value="AAC49260.1"/>
    <property type="molecule type" value="mRNA"/>
</dbReference>
<dbReference type="EMBL" id="BX842634">
    <property type="protein sequence ID" value="CAE76467.1"/>
    <property type="molecule type" value="Genomic_DNA"/>
</dbReference>
<dbReference type="EMBL" id="CM002236">
    <property type="protein sequence ID" value="ESA43946.1"/>
    <property type="molecule type" value="Genomic_DNA"/>
</dbReference>
<dbReference type="EMBL" id="CM002236">
    <property type="protein sequence ID" value="ESA43947.1"/>
    <property type="molecule type" value="Genomic_DNA"/>
</dbReference>
<dbReference type="PIR" id="S65800">
    <property type="entry name" value="S65800"/>
</dbReference>
<dbReference type="RefSeq" id="XP_011392995.1">
    <property type="nucleotide sequence ID" value="XM_011394693.1"/>
</dbReference>
<dbReference type="RefSeq" id="XP_011392996.1">
    <property type="nucleotide sequence ID" value="XM_011394694.1"/>
</dbReference>
<dbReference type="SMR" id="P48466"/>
<dbReference type="FunCoup" id="P48466">
    <property type="interactions" value="1117"/>
</dbReference>
<dbReference type="STRING" id="367110.P48466"/>
<dbReference type="PaxDb" id="5141-EFNCRP00000002178"/>
<dbReference type="EnsemblFungi" id="ESA43946">
    <property type="protein sequence ID" value="ESA43946"/>
    <property type="gene ID" value="NCU02657"/>
</dbReference>
<dbReference type="EnsemblFungi" id="ESA43947">
    <property type="protein sequence ID" value="ESA43947"/>
    <property type="gene ID" value="NCU02657"/>
</dbReference>
<dbReference type="GeneID" id="3881571"/>
<dbReference type="KEGG" id="ncr:NCU02657"/>
<dbReference type="VEuPathDB" id="FungiDB:NCU02657"/>
<dbReference type="HOGENOM" id="CLU_041802_1_1_1"/>
<dbReference type="InParanoid" id="P48466"/>
<dbReference type="OrthoDB" id="5852090at2759"/>
<dbReference type="UniPathway" id="UPA00315">
    <property type="reaction ID" value="UER00080"/>
</dbReference>
<dbReference type="Proteomes" id="UP000001805">
    <property type="component" value="Chromosome 1, Linkage Group I"/>
</dbReference>
<dbReference type="GO" id="GO:0005829">
    <property type="term" value="C:cytosol"/>
    <property type="evidence" value="ECO:0000318"/>
    <property type="project" value="GO_Central"/>
</dbReference>
<dbReference type="GO" id="GO:0005524">
    <property type="term" value="F:ATP binding"/>
    <property type="evidence" value="ECO:0007669"/>
    <property type="project" value="UniProtKB-KW"/>
</dbReference>
<dbReference type="GO" id="GO:0046872">
    <property type="term" value="F:metal ion binding"/>
    <property type="evidence" value="ECO:0007669"/>
    <property type="project" value="UniProtKB-KW"/>
</dbReference>
<dbReference type="GO" id="GO:0004478">
    <property type="term" value="F:methionine adenosyltransferase activity"/>
    <property type="evidence" value="ECO:0000318"/>
    <property type="project" value="GO_Central"/>
</dbReference>
<dbReference type="GO" id="GO:0006555">
    <property type="term" value="P:methionine metabolic process"/>
    <property type="evidence" value="ECO:0007669"/>
    <property type="project" value="EnsemblFungi"/>
</dbReference>
<dbReference type="GO" id="GO:0006730">
    <property type="term" value="P:one-carbon metabolic process"/>
    <property type="evidence" value="ECO:0007669"/>
    <property type="project" value="UniProtKB-KW"/>
</dbReference>
<dbReference type="GO" id="GO:0006556">
    <property type="term" value="P:S-adenosylmethionine biosynthetic process"/>
    <property type="evidence" value="ECO:0000318"/>
    <property type="project" value="GO_Central"/>
</dbReference>
<dbReference type="CDD" id="cd18079">
    <property type="entry name" value="S-AdoMet_synt"/>
    <property type="match status" value="1"/>
</dbReference>
<dbReference type="FunFam" id="3.30.300.10:FF:000001">
    <property type="entry name" value="S-adenosylmethionine synthase"/>
    <property type="match status" value="1"/>
</dbReference>
<dbReference type="FunFam" id="3.30.300.10:FF:000003">
    <property type="entry name" value="S-adenosylmethionine synthase"/>
    <property type="match status" value="1"/>
</dbReference>
<dbReference type="FunFam" id="3.30.300.10:FF:000004">
    <property type="entry name" value="S-adenosylmethionine synthase"/>
    <property type="match status" value="1"/>
</dbReference>
<dbReference type="Gene3D" id="3.30.300.10">
    <property type="match status" value="3"/>
</dbReference>
<dbReference type="HAMAP" id="MF_00086">
    <property type="entry name" value="S_AdoMet_synth1"/>
    <property type="match status" value="1"/>
</dbReference>
<dbReference type="InterPro" id="IPR022631">
    <property type="entry name" value="ADOMET_SYNTHASE_CS"/>
</dbReference>
<dbReference type="InterPro" id="IPR022630">
    <property type="entry name" value="S-AdoMet_synt_C"/>
</dbReference>
<dbReference type="InterPro" id="IPR022629">
    <property type="entry name" value="S-AdoMet_synt_central"/>
</dbReference>
<dbReference type="InterPro" id="IPR022628">
    <property type="entry name" value="S-AdoMet_synt_N"/>
</dbReference>
<dbReference type="InterPro" id="IPR002133">
    <property type="entry name" value="S-AdoMet_synthetase"/>
</dbReference>
<dbReference type="InterPro" id="IPR022636">
    <property type="entry name" value="S-AdoMet_synthetase_sfam"/>
</dbReference>
<dbReference type="NCBIfam" id="TIGR01034">
    <property type="entry name" value="metK"/>
    <property type="match status" value="1"/>
</dbReference>
<dbReference type="PANTHER" id="PTHR11964">
    <property type="entry name" value="S-ADENOSYLMETHIONINE SYNTHETASE"/>
    <property type="match status" value="1"/>
</dbReference>
<dbReference type="Pfam" id="PF02773">
    <property type="entry name" value="S-AdoMet_synt_C"/>
    <property type="match status" value="1"/>
</dbReference>
<dbReference type="Pfam" id="PF02772">
    <property type="entry name" value="S-AdoMet_synt_M"/>
    <property type="match status" value="1"/>
</dbReference>
<dbReference type="Pfam" id="PF00438">
    <property type="entry name" value="S-AdoMet_synt_N"/>
    <property type="match status" value="1"/>
</dbReference>
<dbReference type="PIRSF" id="PIRSF000497">
    <property type="entry name" value="MAT"/>
    <property type="match status" value="1"/>
</dbReference>
<dbReference type="SUPFAM" id="SSF55973">
    <property type="entry name" value="S-adenosylmethionine synthetase"/>
    <property type="match status" value="3"/>
</dbReference>
<dbReference type="PROSITE" id="PS00376">
    <property type="entry name" value="ADOMET_SYNTHASE_1"/>
    <property type="match status" value="1"/>
</dbReference>
<dbReference type="PROSITE" id="PS00377">
    <property type="entry name" value="ADOMET_SYNTHASE_2"/>
    <property type="match status" value="1"/>
</dbReference>
<protein>
    <recommendedName>
        <fullName>S-adenosylmethionine synthase</fullName>
        <shortName>AdoMet synthase</shortName>
        <ecNumber evidence="4">2.5.1.6</ecNumber>
    </recommendedName>
    <alternativeName>
        <fullName>Ethionine resistance protein 1</fullName>
    </alternativeName>
    <alternativeName>
        <fullName>Methionine adenosyltransferase</fullName>
        <shortName>MAT</shortName>
    </alternativeName>
</protein>
<evidence type="ECO:0000250" key="1">
    <source>
        <dbReference type="UniProtKB" id="P0A817"/>
    </source>
</evidence>
<evidence type="ECO:0000250" key="2">
    <source>
        <dbReference type="UniProtKB" id="P13444"/>
    </source>
</evidence>
<evidence type="ECO:0000250" key="3">
    <source>
        <dbReference type="UniProtKB" id="Q00266"/>
    </source>
</evidence>
<evidence type="ECO:0000269" key="4">
    <source>
    </source>
</evidence>
<evidence type="ECO:0000305" key="5"/>
<gene>
    <name type="primary">eth-1</name>
    <name type="ORF">B16B8.070</name>
    <name type="ORF">NCU02657</name>
</gene>
<sequence length="395" mass="42986">MATNGVNGAKHYNEGTFLFTSESVGEGHPDKIADQVSDAILDACLAEDPLSKVACETATKTGMIMVFGEITTKAKLDYQKVVRNAIKDIGYDDSSKGFDYKTCNLLVAIEEQSPDIAQGLHLDDRLENLGAGDQGIMFGYATDETPELFPLTLLFAHKLNAAMSAARRDGSLPWLRPDTKTQVTIEYKHDNGAVVPLRVDTVVVSAQHAPEITTEELRKEILEKIIKTTIPAKYLDEKTVYHIQPSGLFVIGGPQGDAGLTGRKIIVDTYGGWGAHGGGAFSGKDFSKVDRSAAYVGRWIAKSLVAAGLARRALVQLSYAIGVAEPLSIYVDTYGTSDKTSEELVQIIRNNFDLRPGVIVKELDLAKPIYLQTAKNGHFGTNQSFSWEKPKALKF</sequence>
<proteinExistence type="evidence at protein level"/>
<comment type="function">
    <text evidence="4">Catalyzes the formation of S-adenosylmethionine from methionine and ATP. The reaction comprises two steps that are both catalyzed by the same enzyme: formation of S-adenosylmethionine (AdoMet) and triphosphate, and subsequent hydrolysis of the triphosphate.</text>
</comment>
<comment type="catalytic activity">
    <reaction evidence="4">
        <text>L-methionine + ATP + H2O = S-adenosyl-L-methionine + phosphate + diphosphate</text>
        <dbReference type="Rhea" id="RHEA:21080"/>
        <dbReference type="ChEBI" id="CHEBI:15377"/>
        <dbReference type="ChEBI" id="CHEBI:30616"/>
        <dbReference type="ChEBI" id="CHEBI:33019"/>
        <dbReference type="ChEBI" id="CHEBI:43474"/>
        <dbReference type="ChEBI" id="CHEBI:57844"/>
        <dbReference type="ChEBI" id="CHEBI:59789"/>
        <dbReference type="EC" id="2.5.1.6"/>
    </reaction>
</comment>
<comment type="cofactor">
    <cofactor evidence="2">
        <name>Mg(2+)</name>
        <dbReference type="ChEBI" id="CHEBI:18420"/>
    </cofactor>
    <text evidence="2">Binds 2 magnesium ions per subunit. The magnesium ions interact primarily with the substrate.</text>
</comment>
<comment type="cofactor">
    <cofactor evidence="2">
        <name>K(+)</name>
        <dbReference type="ChEBI" id="CHEBI:29103"/>
    </cofactor>
    <text evidence="2">Binds 1 potassium ion per subunit. The potassium ion interacts primarily with the substrate.</text>
</comment>
<comment type="pathway">
    <text evidence="4">Amino-acid biosynthesis; S-adenosyl-L-methionine biosynthesis; S-adenosyl-L-methionine from L-methionine: step 1/1.</text>
</comment>
<comment type="similarity">
    <text evidence="5">Belongs to the AdoMet synthase family.</text>
</comment>
<organism>
    <name type="scientific">Neurospora crassa (strain ATCC 24698 / 74-OR23-1A / CBS 708.71 / DSM 1257 / FGSC 987)</name>
    <dbReference type="NCBI Taxonomy" id="367110"/>
    <lineage>
        <taxon>Eukaryota</taxon>
        <taxon>Fungi</taxon>
        <taxon>Dikarya</taxon>
        <taxon>Ascomycota</taxon>
        <taxon>Pezizomycotina</taxon>
        <taxon>Sordariomycetes</taxon>
        <taxon>Sordariomycetidae</taxon>
        <taxon>Sordariales</taxon>
        <taxon>Sordariaceae</taxon>
        <taxon>Neurospora</taxon>
    </lineage>
</organism>
<feature type="chain" id="PRO_0000174449" description="S-adenosylmethionine synthase">
    <location>
        <begin position="1"/>
        <end position="395"/>
    </location>
</feature>
<feature type="binding site" evidence="2">
    <location>
        <position position="22"/>
    </location>
    <ligand>
        <name>Mg(2+)</name>
        <dbReference type="ChEBI" id="CHEBI:18420"/>
    </ligand>
</feature>
<feature type="binding site" description="in other chain" evidence="3">
    <location>
        <position position="28"/>
    </location>
    <ligand>
        <name>ATP</name>
        <dbReference type="ChEBI" id="CHEBI:30616"/>
        <note>ligand shared between two neighboring subunits</note>
    </ligand>
</feature>
<feature type="binding site" evidence="1">
    <location>
        <position position="56"/>
    </location>
    <ligand>
        <name>K(+)</name>
        <dbReference type="ChEBI" id="CHEBI:29103"/>
    </ligand>
</feature>
<feature type="binding site" description="in other chain" evidence="1">
    <location>
        <position position="69"/>
    </location>
    <ligand>
        <name>L-methionine</name>
        <dbReference type="ChEBI" id="CHEBI:57844"/>
        <note>ligand shared between two neighboring subunits</note>
    </ligand>
</feature>
<feature type="binding site" description="in other chain" evidence="1">
    <location>
        <position position="112"/>
    </location>
    <ligand>
        <name>L-methionine</name>
        <dbReference type="ChEBI" id="CHEBI:57844"/>
        <note>ligand shared between two neighboring subunits</note>
    </ligand>
</feature>
<feature type="binding site" description="in other chain" evidence="3">
    <location>
        <begin position="178"/>
        <end position="180"/>
    </location>
    <ligand>
        <name>ATP</name>
        <dbReference type="ChEBI" id="CHEBI:30616"/>
        <note>ligand shared between two neighboring subunits</note>
    </ligand>
</feature>
<feature type="binding site" description="in other chain" evidence="3">
    <location>
        <begin position="246"/>
        <end position="249"/>
    </location>
    <ligand>
        <name>ATP</name>
        <dbReference type="ChEBI" id="CHEBI:30616"/>
        <note>ligand shared between two neighboring subunits</note>
    </ligand>
</feature>
<feature type="binding site" description="in other chain" evidence="3">
    <location>
        <position position="257"/>
    </location>
    <ligand>
        <name>ATP</name>
        <dbReference type="ChEBI" id="CHEBI:30616"/>
        <note>ligand shared between two neighboring subunits</note>
    </ligand>
</feature>
<feature type="binding site" evidence="1">
    <location>
        <position position="257"/>
    </location>
    <ligand>
        <name>L-methionine</name>
        <dbReference type="ChEBI" id="CHEBI:57844"/>
        <note>ligand shared between two neighboring subunits</note>
    </ligand>
</feature>
<feature type="binding site" description="in other chain" evidence="1">
    <location>
        <begin position="263"/>
        <end position="264"/>
    </location>
    <ligand>
        <name>ATP</name>
        <dbReference type="ChEBI" id="CHEBI:30616"/>
        <note>ligand shared between two neighboring subunits</note>
    </ligand>
</feature>
<feature type="binding site" evidence="1">
    <location>
        <position position="280"/>
    </location>
    <ligand>
        <name>ATP</name>
        <dbReference type="ChEBI" id="CHEBI:30616"/>
        <note>ligand shared between two neighboring subunits</note>
    </ligand>
</feature>
<feature type="binding site" evidence="1">
    <location>
        <position position="284"/>
    </location>
    <ligand>
        <name>ATP</name>
        <dbReference type="ChEBI" id="CHEBI:30616"/>
        <note>ligand shared between two neighboring subunits</note>
    </ligand>
</feature>
<feature type="binding site" evidence="2">
    <location>
        <position position="288"/>
    </location>
    <ligand>
        <name>ATP</name>
        <dbReference type="ChEBI" id="CHEBI:30616"/>
        <note>ligand shared between two neighboring subunits</note>
    </ligand>
</feature>
<feature type="binding site" description="in other chain" evidence="1">
    <location>
        <position position="288"/>
    </location>
    <ligand>
        <name>L-methionine</name>
        <dbReference type="ChEBI" id="CHEBI:57844"/>
        <note>ligand shared between two neighboring subunits</note>
    </ligand>
</feature>
<keyword id="KW-0067">ATP-binding</keyword>
<keyword id="KW-0460">Magnesium</keyword>
<keyword id="KW-0479">Metal-binding</keyword>
<keyword id="KW-0547">Nucleotide-binding</keyword>
<keyword id="KW-0554">One-carbon metabolism</keyword>
<keyword id="KW-0630">Potassium</keyword>
<keyword id="KW-1185">Reference proteome</keyword>
<keyword id="KW-0808">Transferase</keyword>